<proteinExistence type="inferred from homology"/>
<name>DEF1_BACSU</name>
<gene>
    <name type="primary">defA</name>
    <name type="synonym">def</name>
    <name type="synonym">yloK</name>
    <name type="ordered locus">BSU15720</name>
</gene>
<sequence>MAVKKVVTHPAEVLETPAETVTVFDKKLKKLLDDMYDTMLEMDGVGLAAPQIGILKRAAVVEIGDDRGRIDLVNPEILEKSGEQTGIEGCLSFPNVYGDVTRADYVKVRAFNRQGKPFILEARGFLARAVQHEMDHLDGVLFTSKISKYYTEDELADMEG</sequence>
<dbReference type="EC" id="3.5.1.88" evidence="1"/>
<dbReference type="EMBL" id="Y10304">
    <property type="protein sequence ID" value="CAA71349.1"/>
    <property type="molecule type" value="Genomic_DNA"/>
</dbReference>
<dbReference type="EMBL" id="Y13937">
    <property type="protein sequence ID" value="CAA74262.1"/>
    <property type="molecule type" value="Genomic_DNA"/>
</dbReference>
<dbReference type="EMBL" id="AL009126">
    <property type="protein sequence ID" value="CAB13445.1"/>
    <property type="molecule type" value="Genomic_DNA"/>
</dbReference>
<dbReference type="PIR" id="F69613">
    <property type="entry name" value="F69613"/>
</dbReference>
<dbReference type="RefSeq" id="NP_389454.1">
    <property type="nucleotide sequence ID" value="NC_000964.3"/>
</dbReference>
<dbReference type="RefSeq" id="WP_003232077.1">
    <property type="nucleotide sequence ID" value="NZ_OZ025638.1"/>
</dbReference>
<dbReference type="SMR" id="P94462"/>
<dbReference type="FunCoup" id="P94462">
    <property type="interactions" value="499"/>
</dbReference>
<dbReference type="IntAct" id="P94462">
    <property type="interactions" value="1"/>
</dbReference>
<dbReference type="STRING" id="224308.BSU15720"/>
<dbReference type="PaxDb" id="224308-BSU15720"/>
<dbReference type="EnsemblBacteria" id="CAB13445">
    <property type="protein sequence ID" value="CAB13445"/>
    <property type="gene ID" value="BSU_15720"/>
</dbReference>
<dbReference type="GeneID" id="938819"/>
<dbReference type="KEGG" id="bsu:BSU15720"/>
<dbReference type="PATRIC" id="fig|224308.179.peg.1712"/>
<dbReference type="eggNOG" id="COG0242">
    <property type="taxonomic scope" value="Bacteria"/>
</dbReference>
<dbReference type="InParanoid" id="P94462"/>
<dbReference type="OrthoDB" id="9784988at2"/>
<dbReference type="PhylomeDB" id="P94462"/>
<dbReference type="BioCyc" id="BSUB:BSU15720-MONOMER"/>
<dbReference type="BRENDA" id="3.5.1.88">
    <property type="organism ID" value="658"/>
</dbReference>
<dbReference type="Proteomes" id="UP000001570">
    <property type="component" value="Chromosome"/>
</dbReference>
<dbReference type="GO" id="GO:0046872">
    <property type="term" value="F:metal ion binding"/>
    <property type="evidence" value="ECO:0007669"/>
    <property type="project" value="UniProtKB-KW"/>
</dbReference>
<dbReference type="GO" id="GO:0042586">
    <property type="term" value="F:peptide deformylase activity"/>
    <property type="evidence" value="ECO:0000318"/>
    <property type="project" value="GO_Central"/>
</dbReference>
<dbReference type="GO" id="GO:0043686">
    <property type="term" value="P:co-translational protein modification"/>
    <property type="evidence" value="ECO:0000318"/>
    <property type="project" value="GO_Central"/>
</dbReference>
<dbReference type="GO" id="GO:0006412">
    <property type="term" value="P:translation"/>
    <property type="evidence" value="ECO:0007669"/>
    <property type="project" value="UniProtKB-UniRule"/>
</dbReference>
<dbReference type="CDD" id="cd00487">
    <property type="entry name" value="Pep_deformylase"/>
    <property type="match status" value="1"/>
</dbReference>
<dbReference type="FunFam" id="3.90.45.10:FF:000005">
    <property type="entry name" value="Peptide deformylase"/>
    <property type="match status" value="1"/>
</dbReference>
<dbReference type="Gene3D" id="3.90.45.10">
    <property type="entry name" value="Peptide deformylase"/>
    <property type="match status" value="1"/>
</dbReference>
<dbReference type="HAMAP" id="MF_00163">
    <property type="entry name" value="Pep_deformylase"/>
    <property type="match status" value="1"/>
</dbReference>
<dbReference type="InterPro" id="IPR023635">
    <property type="entry name" value="Peptide_deformylase"/>
</dbReference>
<dbReference type="InterPro" id="IPR036821">
    <property type="entry name" value="Peptide_deformylase_sf"/>
</dbReference>
<dbReference type="NCBIfam" id="TIGR00079">
    <property type="entry name" value="pept_deformyl"/>
    <property type="match status" value="1"/>
</dbReference>
<dbReference type="NCBIfam" id="NF001159">
    <property type="entry name" value="PRK00150.1-3"/>
    <property type="match status" value="1"/>
</dbReference>
<dbReference type="PANTHER" id="PTHR10458">
    <property type="entry name" value="PEPTIDE DEFORMYLASE"/>
    <property type="match status" value="1"/>
</dbReference>
<dbReference type="PANTHER" id="PTHR10458:SF22">
    <property type="entry name" value="PEPTIDE DEFORMYLASE"/>
    <property type="match status" value="1"/>
</dbReference>
<dbReference type="Pfam" id="PF01327">
    <property type="entry name" value="Pep_deformylase"/>
    <property type="match status" value="1"/>
</dbReference>
<dbReference type="PIRSF" id="PIRSF004749">
    <property type="entry name" value="Pep_def"/>
    <property type="match status" value="1"/>
</dbReference>
<dbReference type="PRINTS" id="PR01576">
    <property type="entry name" value="PDEFORMYLASE"/>
</dbReference>
<dbReference type="SUPFAM" id="SSF56420">
    <property type="entry name" value="Peptide deformylase"/>
    <property type="match status" value="1"/>
</dbReference>
<evidence type="ECO:0000255" key="1">
    <source>
        <dbReference type="HAMAP-Rule" id="MF_00163"/>
    </source>
</evidence>
<reference key="1">
    <citation type="journal article" date="1997" name="J. Mol. Biol.">
        <title>A survey of polypeptide deformylase function throughout the eubacterial lineage.</title>
        <authorList>
            <person name="Mazel D."/>
            <person name="Coic E."/>
            <person name="Blanchard S."/>
            <person name="Saurin W."/>
            <person name="Marliere P."/>
        </authorList>
    </citation>
    <scope>NUCLEOTIDE SEQUENCE [GENOMIC DNA]</scope>
    <source>
        <strain>168</strain>
    </source>
</reference>
<reference key="2">
    <citation type="journal article" date="1998" name="Microbiology">
        <title>A 28 kbp segment from the spoVM region of the Bacillus subtilis 168 genome.</title>
        <authorList>
            <person name="Foulger D."/>
            <person name="Errington J."/>
        </authorList>
    </citation>
    <scope>NUCLEOTIDE SEQUENCE [GENOMIC DNA]</scope>
    <source>
        <strain>168</strain>
    </source>
</reference>
<reference key="3">
    <citation type="journal article" date="1997" name="Nature">
        <title>The complete genome sequence of the Gram-positive bacterium Bacillus subtilis.</title>
        <authorList>
            <person name="Kunst F."/>
            <person name="Ogasawara N."/>
            <person name="Moszer I."/>
            <person name="Albertini A.M."/>
            <person name="Alloni G."/>
            <person name="Azevedo V."/>
            <person name="Bertero M.G."/>
            <person name="Bessieres P."/>
            <person name="Bolotin A."/>
            <person name="Borchert S."/>
            <person name="Borriss R."/>
            <person name="Boursier L."/>
            <person name="Brans A."/>
            <person name="Braun M."/>
            <person name="Brignell S.C."/>
            <person name="Bron S."/>
            <person name="Brouillet S."/>
            <person name="Bruschi C.V."/>
            <person name="Caldwell B."/>
            <person name="Capuano V."/>
            <person name="Carter N.M."/>
            <person name="Choi S.-K."/>
            <person name="Codani J.-J."/>
            <person name="Connerton I.F."/>
            <person name="Cummings N.J."/>
            <person name="Daniel R.A."/>
            <person name="Denizot F."/>
            <person name="Devine K.M."/>
            <person name="Duesterhoeft A."/>
            <person name="Ehrlich S.D."/>
            <person name="Emmerson P.T."/>
            <person name="Entian K.-D."/>
            <person name="Errington J."/>
            <person name="Fabret C."/>
            <person name="Ferrari E."/>
            <person name="Foulger D."/>
            <person name="Fritz C."/>
            <person name="Fujita M."/>
            <person name="Fujita Y."/>
            <person name="Fuma S."/>
            <person name="Galizzi A."/>
            <person name="Galleron N."/>
            <person name="Ghim S.-Y."/>
            <person name="Glaser P."/>
            <person name="Goffeau A."/>
            <person name="Golightly E.J."/>
            <person name="Grandi G."/>
            <person name="Guiseppi G."/>
            <person name="Guy B.J."/>
            <person name="Haga K."/>
            <person name="Haiech J."/>
            <person name="Harwood C.R."/>
            <person name="Henaut A."/>
            <person name="Hilbert H."/>
            <person name="Holsappel S."/>
            <person name="Hosono S."/>
            <person name="Hullo M.-F."/>
            <person name="Itaya M."/>
            <person name="Jones L.-M."/>
            <person name="Joris B."/>
            <person name="Karamata D."/>
            <person name="Kasahara Y."/>
            <person name="Klaerr-Blanchard M."/>
            <person name="Klein C."/>
            <person name="Kobayashi Y."/>
            <person name="Koetter P."/>
            <person name="Koningstein G."/>
            <person name="Krogh S."/>
            <person name="Kumano M."/>
            <person name="Kurita K."/>
            <person name="Lapidus A."/>
            <person name="Lardinois S."/>
            <person name="Lauber J."/>
            <person name="Lazarevic V."/>
            <person name="Lee S.-M."/>
            <person name="Levine A."/>
            <person name="Liu H."/>
            <person name="Masuda S."/>
            <person name="Mauel C."/>
            <person name="Medigue C."/>
            <person name="Medina N."/>
            <person name="Mellado R.P."/>
            <person name="Mizuno M."/>
            <person name="Moestl D."/>
            <person name="Nakai S."/>
            <person name="Noback M."/>
            <person name="Noone D."/>
            <person name="O'Reilly M."/>
            <person name="Ogawa K."/>
            <person name="Ogiwara A."/>
            <person name="Oudega B."/>
            <person name="Park S.-H."/>
            <person name="Parro V."/>
            <person name="Pohl T.M."/>
            <person name="Portetelle D."/>
            <person name="Porwollik S."/>
            <person name="Prescott A.M."/>
            <person name="Presecan E."/>
            <person name="Pujic P."/>
            <person name="Purnelle B."/>
            <person name="Rapoport G."/>
            <person name="Rey M."/>
            <person name="Reynolds S."/>
            <person name="Rieger M."/>
            <person name="Rivolta C."/>
            <person name="Rocha E."/>
            <person name="Roche B."/>
            <person name="Rose M."/>
            <person name="Sadaie Y."/>
            <person name="Sato T."/>
            <person name="Scanlan E."/>
            <person name="Schleich S."/>
            <person name="Schroeter R."/>
            <person name="Scoffone F."/>
            <person name="Sekiguchi J."/>
            <person name="Sekowska A."/>
            <person name="Seror S.J."/>
            <person name="Serror P."/>
            <person name="Shin B.-S."/>
            <person name="Soldo B."/>
            <person name="Sorokin A."/>
            <person name="Tacconi E."/>
            <person name="Takagi T."/>
            <person name="Takahashi H."/>
            <person name="Takemaru K."/>
            <person name="Takeuchi M."/>
            <person name="Tamakoshi A."/>
            <person name="Tanaka T."/>
            <person name="Terpstra P."/>
            <person name="Tognoni A."/>
            <person name="Tosato V."/>
            <person name="Uchiyama S."/>
            <person name="Vandenbol M."/>
            <person name="Vannier F."/>
            <person name="Vassarotti A."/>
            <person name="Viari A."/>
            <person name="Wambutt R."/>
            <person name="Wedler E."/>
            <person name="Wedler H."/>
            <person name="Weitzenegger T."/>
            <person name="Winters P."/>
            <person name="Wipat A."/>
            <person name="Yamamoto H."/>
            <person name="Yamane K."/>
            <person name="Yasumoto K."/>
            <person name="Yata K."/>
            <person name="Yoshida K."/>
            <person name="Yoshikawa H.-F."/>
            <person name="Zumstein E."/>
            <person name="Yoshikawa H."/>
            <person name="Danchin A."/>
        </authorList>
    </citation>
    <scope>NUCLEOTIDE SEQUENCE [LARGE SCALE GENOMIC DNA]</scope>
    <source>
        <strain>168</strain>
    </source>
</reference>
<organism>
    <name type="scientific">Bacillus subtilis (strain 168)</name>
    <dbReference type="NCBI Taxonomy" id="224308"/>
    <lineage>
        <taxon>Bacteria</taxon>
        <taxon>Bacillati</taxon>
        <taxon>Bacillota</taxon>
        <taxon>Bacilli</taxon>
        <taxon>Bacillales</taxon>
        <taxon>Bacillaceae</taxon>
        <taxon>Bacillus</taxon>
    </lineage>
</organism>
<accession>P94462</accession>
<protein>
    <recommendedName>
        <fullName evidence="1">Peptide deformylase 1</fullName>
        <shortName evidence="1">PDF 1</shortName>
        <ecNumber evidence="1">3.5.1.88</ecNumber>
    </recommendedName>
    <alternativeName>
        <fullName evidence="1">Polypeptide deformylase 1</fullName>
    </alternativeName>
</protein>
<comment type="function">
    <text evidence="1">Removes the formyl group from the N-terminal Met of newly synthesized proteins. Requires at least a dipeptide for an efficient rate of reaction. N-terminal L-methionine is a prerequisite for activity but the enzyme has broad specificity at other positions.</text>
</comment>
<comment type="catalytic activity">
    <reaction evidence="1">
        <text>N-terminal N-formyl-L-methionyl-[peptide] + H2O = N-terminal L-methionyl-[peptide] + formate</text>
        <dbReference type="Rhea" id="RHEA:24420"/>
        <dbReference type="Rhea" id="RHEA-COMP:10639"/>
        <dbReference type="Rhea" id="RHEA-COMP:10640"/>
        <dbReference type="ChEBI" id="CHEBI:15377"/>
        <dbReference type="ChEBI" id="CHEBI:15740"/>
        <dbReference type="ChEBI" id="CHEBI:49298"/>
        <dbReference type="ChEBI" id="CHEBI:64731"/>
        <dbReference type="EC" id="3.5.1.88"/>
    </reaction>
</comment>
<comment type="cofactor">
    <cofactor evidence="1">
        <name>Fe(2+)</name>
        <dbReference type="ChEBI" id="CHEBI:29033"/>
    </cofactor>
    <text evidence="1">Binds 1 Fe(2+) ion.</text>
</comment>
<comment type="similarity">
    <text evidence="1">Belongs to the polypeptide deformylase family.</text>
</comment>
<feature type="chain" id="PRO_0000082739" description="Peptide deformylase 1">
    <location>
        <begin position="1"/>
        <end position="160"/>
    </location>
</feature>
<feature type="active site" evidence="1">
    <location>
        <position position="133"/>
    </location>
</feature>
<feature type="binding site" evidence="1">
    <location>
        <position position="90"/>
    </location>
    <ligand>
        <name>Fe cation</name>
        <dbReference type="ChEBI" id="CHEBI:24875"/>
    </ligand>
</feature>
<feature type="binding site" evidence="1">
    <location>
        <position position="132"/>
    </location>
    <ligand>
        <name>Fe cation</name>
        <dbReference type="ChEBI" id="CHEBI:24875"/>
    </ligand>
</feature>
<feature type="binding site" evidence="1">
    <location>
        <position position="136"/>
    </location>
    <ligand>
        <name>Fe cation</name>
        <dbReference type="ChEBI" id="CHEBI:24875"/>
    </ligand>
</feature>
<keyword id="KW-0378">Hydrolase</keyword>
<keyword id="KW-0408">Iron</keyword>
<keyword id="KW-0479">Metal-binding</keyword>
<keyword id="KW-0648">Protein biosynthesis</keyword>
<keyword id="KW-1185">Reference proteome</keyword>